<name>AHR1_CANAL</name>
<comment type="function">
    <text evidence="3 4 5 6">Transcription factor that binds the promoters of genes involved in biofilm formation, which include several key adhesion genes, and recruits MCM1 to these sites. Plays an important role in hyphal growth and virulence. Promotes conversion of opaque cells to white phase, but needs existence of EFG1, a key regulator required for maintenance of the white state.</text>
</comment>
<comment type="subunit">
    <text evidence="4">Interacts with MCM1.</text>
</comment>
<comment type="subcellular location">
    <subcellularLocation>
        <location evidence="1">Nucleus</location>
    </subcellularLocation>
</comment>
<comment type="disruption phenotype">
    <text evidence="5">Stabilizes the opaque phase.</text>
</comment>
<keyword id="KW-0130">Cell adhesion</keyword>
<keyword id="KW-0238">DNA-binding</keyword>
<keyword id="KW-0479">Metal-binding</keyword>
<keyword id="KW-0539">Nucleus</keyword>
<keyword id="KW-1185">Reference proteome</keyword>
<keyword id="KW-0804">Transcription</keyword>
<keyword id="KW-0805">Transcription regulation</keyword>
<keyword id="KW-0843">Virulence</keyword>
<keyword id="KW-0862">Zinc</keyword>
<evidence type="ECO:0000255" key="1">
    <source>
        <dbReference type="PROSITE-ProRule" id="PRU00227"/>
    </source>
</evidence>
<evidence type="ECO:0000256" key="2">
    <source>
        <dbReference type="SAM" id="MobiDB-lite"/>
    </source>
</evidence>
<evidence type="ECO:0000269" key="3">
    <source>
    </source>
</evidence>
<evidence type="ECO:0000269" key="4">
    <source>
    </source>
</evidence>
<evidence type="ECO:0000269" key="5">
    <source>
    </source>
</evidence>
<evidence type="ECO:0000269" key="6">
    <source>
    </source>
</evidence>
<accession>Q5A4F3</accession>
<accession>A0A1D8PKK0</accession>
<accession>Q53EJ0</accession>
<organism>
    <name type="scientific">Candida albicans (strain SC5314 / ATCC MYA-2876)</name>
    <name type="common">Yeast</name>
    <dbReference type="NCBI Taxonomy" id="237561"/>
    <lineage>
        <taxon>Eukaryota</taxon>
        <taxon>Fungi</taxon>
        <taxon>Dikarya</taxon>
        <taxon>Ascomycota</taxon>
        <taxon>Saccharomycotina</taxon>
        <taxon>Pichiomycetes</taxon>
        <taxon>Debaryomycetaceae</taxon>
        <taxon>Candida/Lodderomyces clade</taxon>
        <taxon>Candida</taxon>
    </lineage>
</organism>
<proteinExistence type="evidence at protein level"/>
<feature type="chain" id="PRO_0000420186" description="Adhesion and hyphal regulator 1">
    <location>
        <begin position="1"/>
        <end position="624"/>
    </location>
</feature>
<feature type="DNA-binding region" description="Zn(2)-C6 fungal-type" evidence="1">
    <location>
        <begin position="19"/>
        <end position="46"/>
    </location>
</feature>
<feature type="region of interest" description="Disordered" evidence="2">
    <location>
        <begin position="63"/>
        <end position="84"/>
    </location>
</feature>
<feature type="region of interest" description="Disordered" evidence="2">
    <location>
        <begin position="230"/>
        <end position="250"/>
    </location>
</feature>
<feature type="compositionally biased region" description="Polar residues" evidence="2">
    <location>
        <begin position="237"/>
        <end position="250"/>
    </location>
</feature>
<sequence length="624" mass="72353">MAKKKLNSTIKRSRTRSGCVTCRDRHIKCDEQQPVCKNCQKSNRKCYRGIRLNFTQYTFYNPDDNKPKELQQNEQPNSSHYAFPNLEPNPVSQKHRILDQSITIASLYDDLKKYKPYIHLHTPEDLRESDLQFQEDTYNSYISTSAINLRGKKLTKRDPGLSTSLSVINPTLESEIKPNPVILNQLSFHPPPNLNTGVLYPPTATAATTTTSSPTNHHLHPYFVSSIPNPQHHPMLDTSQHQETTSTDPNQFDYSHLSMPQSTPLLMKYDITTYVRLIETEKYYMLLDLANELDIWKKIIPSLCLQISENDSFLLDCLMSCSRNTSVNLLDLTNEQLNKWSQLKNAPVISERIQQFEHILISIVLILLGLYLNTTKVRLTDYHKVIFNNQAKLFSHVLRKIHTFITSNKPNSAVLTNAIQSITMLKFFIDKNYDFSYEFKNIQKGRVTDTSEEITYSNSNLYSNPDISYISTFNEYEIIYLNNSYQNLVHVDQSNSMSMGESQLYKDLLWYLMKVDFVINYPEAANNLVLDHNVVYQQITNASTDLSFSNNLNYLNPRSYANYFLKEFIIKVLSMGSNAIIEDANNRINTLFNFIDQSYMDPELKSQFHHCFTWTVRYIHPVSD</sequence>
<protein>
    <recommendedName>
        <fullName>Adhesion and hyphal regulator 1</fullName>
    </recommendedName>
    <alternativeName>
        <fullName>Zinc finger transcription factor 37</fullName>
    </alternativeName>
</protein>
<reference key="1">
    <citation type="journal article" date="2004" name="Proc. Natl. Acad. Sci. U.S.A.">
        <title>The diploid genome sequence of Candida albicans.</title>
        <authorList>
            <person name="Jones T."/>
            <person name="Federspiel N.A."/>
            <person name="Chibana H."/>
            <person name="Dungan J."/>
            <person name="Kalman S."/>
            <person name="Magee B.B."/>
            <person name="Newport G."/>
            <person name="Thorstenson Y.R."/>
            <person name="Agabian N."/>
            <person name="Magee P.T."/>
            <person name="Davis R.W."/>
            <person name="Scherer S."/>
        </authorList>
    </citation>
    <scope>NUCLEOTIDE SEQUENCE [LARGE SCALE GENOMIC DNA]</scope>
    <source>
        <strain>SC5314 / ATCC MYA-2876</strain>
    </source>
</reference>
<reference key="2">
    <citation type="journal article" date="2007" name="Genome Biol.">
        <title>Assembly of the Candida albicans genome into sixteen supercontigs aligned on the eight chromosomes.</title>
        <authorList>
            <person name="van het Hoog M."/>
            <person name="Rast T.J."/>
            <person name="Martchenko M."/>
            <person name="Grindle S."/>
            <person name="Dignard D."/>
            <person name="Hogues H."/>
            <person name="Cuomo C."/>
            <person name="Berriman M."/>
            <person name="Scherer S."/>
            <person name="Magee B.B."/>
            <person name="Whiteway M."/>
            <person name="Chibana H."/>
            <person name="Nantel A."/>
            <person name="Magee P.T."/>
        </authorList>
    </citation>
    <scope>GENOME REANNOTATION</scope>
    <source>
        <strain>SC5314 / ATCC MYA-2876</strain>
    </source>
</reference>
<reference key="3">
    <citation type="journal article" date="2013" name="Genome Biol.">
        <title>Assembly of a phased diploid Candida albicans genome facilitates allele-specific measurements and provides a simple model for repeat and indel structure.</title>
        <authorList>
            <person name="Muzzey D."/>
            <person name="Schwartz K."/>
            <person name="Weissman J.S."/>
            <person name="Sherlock G."/>
        </authorList>
    </citation>
    <scope>NUCLEOTIDE SEQUENCE [LARGE SCALE GENOMIC DNA]</scope>
    <scope>GENOME REANNOTATION</scope>
    <source>
        <strain>SC5314 / ATCC MYA-2876</strain>
    </source>
</reference>
<reference key="4">
    <citation type="journal article" date="2005" name="Comp. Funct. Genomics">
        <title>In silico analysis for transcription factors with Zn(II)(2)C(6) binuclear cluster DNA-binding domains in Candida albicans.</title>
        <authorList>
            <person name="Maicas S."/>
            <person name="Moreno I."/>
            <person name="Nieto A."/>
            <person name="Gomez M."/>
            <person name="Sentandreu R."/>
            <person name="Valentin E."/>
        </authorList>
    </citation>
    <scope>DOMAIN</scope>
    <scope>POSSIBLE FUNCTION</scope>
</reference>
<reference key="5">
    <citation type="journal article" date="2007" name="Cell. Microbiol.">
        <title>Candida albicans protein kinase CK2 governs virulence during oropharyngeal candidiasis.</title>
        <authorList>
            <person name="Chiang L.Y."/>
            <person name="Sheppard D.C."/>
            <person name="Bruno V.M."/>
            <person name="Mitchell A.P."/>
            <person name="Edwards J.E. Jr."/>
            <person name="Filler S.G."/>
        </authorList>
    </citation>
    <scope>FUNCTION</scope>
</reference>
<reference key="6">
    <citation type="journal article" date="2011" name="FEBS Lett.">
        <title>Candida albicans Zcf37, a zinc finger protein, is required for stabilization of the white state.</title>
        <authorList>
            <person name="Wang H."/>
            <person name="Song W."/>
            <person name="Huang G."/>
            <person name="Zhou Z."/>
            <person name="Ding Y."/>
            <person name="Chen J."/>
        </authorList>
    </citation>
    <scope>FUNCTION</scope>
    <scope>DISRUPTION PHENOTYPE</scope>
</reference>
<reference key="7">
    <citation type="journal article" date="2011" name="Mol. Microbiol.">
        <title>The zinc cluster transcription factor Ahr1p directs Mcm1p regulation of Candida albicans adhesion.</title>
        <authorList>
            <person name="Askew C."/>
            <person name="Sellam A."/>
            <person name="Epp E."/>
            <person name="Mallick J."/>
            <person name="Hogues H."/>
            <person name="Mullick A."/>
            <person name="Nantel A."/>
            <person name="Whiteway M."/>
        </authorList>
    </citation>
    <scope>FUNCTION</scope>
    <scope>DNA-BINDING</scope>
    <scope>INTERACTION WITH MCM1</scope>
</reference>
<reference key="8">
    <citation type="journal article" date="2011" name="PLoS ONE">
        <title>In vivo systematic analysis of Candida albicans Zn2-Cys6 transcription factors mutants for mice organ colonization.</title>
        <authorList>
            <person name="Vandeputte P."/>
            <person name="Ischer F."/>
            <person name="Sanglard D."/>
            <person name="Coste A.T."/>
        </authorList>
    </citation>
    <scope>FUNCTION</scope>
</reference>
<dbReference type="EMBL" id="CP017625">
    <property type="protein sequence ID" value="AOW28608.1"/>
    <property type="molecule type" value="Genomic_DNA"/>
</dbReference>
<dbReference type="RefSeq" id="XP_716622.1">
    <property type="nucleotide sequence ID" value="XM_711529.1"/>
</dbReference>
<dbReference type="SMR" id="Q5A4F3"/>
<dbReference type="BioGRID" id="1224827">
    <property type="interactions" value="2"/>
</dbReference>
<dbReference type="STRING" id="237561.Q5A4F3"/>
<dbReference type="EnsemblFungi" id="C3_06000W_A-T">
    <property type="protein sequence ID" value="C3_06000W_A-T-p1"/>
    <property type="gene ID" value="C3_06000W_A"/>
</dbReference>
<dbReference type="GeneID" id="3641733"/>
<dbReference type="KEGG" id="cal:CAALFM_C306000WA"/>
<dbReference type="CGD" id="CAL0000197462">
    <property type="gene designation" value="AHR1"/>
</dbReference>
<dbReference type="VEuPathDB" id="FungiDB:C3_06000W_A"/>
<dbReference type="eggNOG" id="ENOG502QT0Z">
    <property type="taxonomic scope" value="Eukaryota"/>
</dbReference>
<dbReference type="HOGENOM" id="CLU_410587_0_0_1"/>
<dbReference type="InParanoid" id="Q5A4F3"/>
<dbReference type="OMA" id="CYRGIRL"/>
<dbReference type="OrthoDB" id="416217at2759"/>
<dbReference type="PHI-base" id="PHI:10320"/>
<dbReference type="Proteomes" id="UP000000559">
    <property type="component" value="Chromosome 3"/>
</dbReference>
<dbReference type="GO" id="GO:0005634">
    <property type="term" value="C:nucleus"/>
    <property type="evidence" value="ECO:0000316"/>
    <property type="project" value="CGD"/>
</dbReference>
<dbReference type="GO" id="GO:0001216">
    <property type="term" value="F:DNA-binding transcription activator activity"/>
    <property type="evidence" value="ECO:0000315"/>
    <property type="project" value="CGD"/>
</dbReference>
<dbReference type="GO" id="GO:0003700">
    <property type="term" value="F:DNA-binding transcription factor activity"/>
    <property type="evidence" value="ECO:0000315"/>
    <property type="project" value="CGD"/>
</dbReference>
<dbReference type="GO" id="GO:0000981">
    <property type="term" value="F:DNA-binding transcription factor activity, RNA polymerase II-specific"/>
    <property type="evidence" value="ECO:0007669"/>
    <property type="project" value="InterPro"/>
</dbReference>
<dbReference type="GO" id="GO:0043565">
    <property type="term" value="F:sequence-specific DNA binding"/>
    <property type="evidence" value="ECO:0000314"/>
    <property type="project" value="CGD"/>
</dbReference>
<dbReference type="GO" id="GO:0000976">
    <property type="term" value="F:transcription cis-regulatory region binding"/>
    <property type="evidence" value="ECO:0000318"/>
    <property type="project" value="GO_Central"/>
</dbReference>
<dbReference type="GO" id="GO:0008270">
    <property type="term" value="F:zinc ion binding"/>
    <property type="evidence" value="ECO:0007669"/>
    <property type="project" value="InterPro"/>
</dbReference>
<dbReference type="GO" id="GO:0044403">
    <property type="term" value="P:biological process involved in symbiotic interaction"/>
    <property type="evidence" value="ECO:0000315"/>
    <property type="project" value="CGD"/>
</dbReference>
<dbReference type="GO" id="GO:0007155">
    <property type="term" value="P:cell adhesion"/>
    <property type="evidence" value="ECO:0000315"/>
    <property type="project" value="CGD"/>
</dbReference>
<dbReference type="GO" id="GO:0043709">
    <property type="term" value="P:cell adhesion involved in single-species biofilm formation"/>
    <property type="evidence" value="ECO:0000315"/>
    <property type="project" value="CGD"/>
</dbReference>
<dbReference type="GO" id="GO:0042149">
    <property type="term" value="P:cellular response to glucose starvation"/>
    <property type="evidence" value="ECO:0000315"/>
    <property type="project" value="CGD"/>
</dbReference>
<dbReference type="GO" id="GO:0030447">
    <property type="term" value="P:filamentous growth"/>
    <property type="evidence" value="ECO:0000315"/>
    <property type="project" value="CGD"/>
</dbReference>
<dbReference type="GO" id="GO:0036180">
    <property type="term" value="P:filamentous growth of a population of unicellular organisms in response to biotic stimulus"/>
    <property type="evidence" value="ECO:0000315"/>
    <property type="project" value="CGD"/>
</dbReference>
<dbReference type="GO" id="GO:0001403">
    <property type="term" value="P:invasive growth in response to glucose limitation"/>
    <property type="evidence" value="ECO:0000316"/>
    <property type="project" value="CGD"/>
</dbReference>
<dbReference type="GO" id="GO:0007618">
    <property type="term" value="P:mating"/>
    <property type="evidence" value="ECO:0000315"/>
    <property type="project" value="CGD"/>
</dbReference>
<dbReference type="GO" id="GO:2000134">
    <property type="term" value="P:negative regulation of G1/S transition of mitotic cell cycle"/>
    <property type="evidence" value="ECO:0000315"/>
    <property type="project" value="CGD"/>
</dbReference>
<dbReference type="GO" id="GO:1900189">
    <property type="term" value="P:positive regulation of cell adhesion involved in single-species biofilm formation"/>
    <property type="evidence" value="ECO:0000315"/>
    <property type="project" value="CGD"/>
</dbReference>
<dbReference type="GO" id="GO:1900445">
    <property type="term" value="P:positive regulation of filamentous growth of a population of unicellular organisms in response to biotic stimulus"/>
    <property type="evidence" value="ECO:0000315"/>
    <property type="project" value="CGD"/>
</dbReference>
<dbReference type="GO" id="GO:0045944">
    <property type="term" value="P:positive regulation of transcription by RNA polymerase II"/>
    <property type="evidence" value="ECO:0000316"/>
    <property type="project" value="CGD"/>
</dbReference>
<dbReference type="GO" id="GO:1900443">
    <property type="term" value="P:regulation of filamentous growth of a population of unicellular organisms in response to biotic stimulus"/>
    <property type="evidence" value="ECO:0000315"/>
    <property type="project" value="CGD"/>
</dbReference>
<dbReference type="GO" id="GO:1900239">
    <property type="term" value="P:regulation of phenotypic switching"/>
    <property type="evidence" value="ECO:0000315"/>
    <property type="project" value="CGD"/>
</dbReference>
<dbReference type="CDD" id="cd00067">
    <property type="entry name" value="GAL4"/>
    <property type="match status" value="1"/>
</dbReference>
<dbReference type="FunFam" id="4.10.240.10:FF:000075">
    <property type="entry name" value="Transcriptional regulatory protein moc3"/>
    <property type="match status" value="1"/>
</dbReference>
<dbReference type="Gene3D" id="4.10.240.10">
    <property type="entry name" value="Zn(2)-C6 fungal-type DNA-binding domain"/>
    <property type="match status" value="1"/>
</dbReference>
<dbReference type="InterPro" id="IPR036864">
    <property type="entry name" value="Zn2-C6_fun-type_DNA-bd_sf"/>
</dbReference>
<dbReference type="InterPro" id="IPR001138">
    <property type="entry name" value="Zn2Cys6_DnaBD"/>
</dbReference>
<dbReference type="PANTHER" id="PTHR37534:SF2">
    <property type="entry name" value="N-ACETYLTRANSFERASE DOMAIN-CONTAINING PROTEIN"/>
    <property type="match status" value="1"/>
</dbReference>
<dbReference type="PANTHER" id="PTHR37534">
    <property type="entry name" value="TRANSCRIPTIONAL ACTIVATOR PROTEIN UGA3"/>
    <property type="match status" value="1"/>
</dbReference>
<dbReference type="Pfam" id="PF00172">
    <property type="entry name" value="Zn_clus"/>
    <property type="match status" value="1"/>
</dbReference>
<dbReference type="SMART" id="SM00066">
    <property type="entry name" value="GAL4"/>
    <property type="match status" value="1"/>
</dbReference>
<dbReference type="SUPFAM" id="SSF57701">
    <property type="entry name" value="Zn2/Cys6 DNA-binding domain"/>
    <property type="match status" value="1"/>
</dbReference>
<dbReference type="PROSITE" id="PS00463">
    <property type="entry name" value="ZN2_CY6_FUNGAL_1"/>
    <property type="match status" value="1"/>
</dbReference>
<dbReference type="PROSITE" id="PS50048">
    <property type="entry name" value="ZN2_CY6_FUNGAL_2"/>
    <property type="match status" value="1"/>
</dbReference>
<gene>
    <name type="primary">AHR1</name>
    <name type="synonym">ZCF37</name>
    <name type="ordered locus">CAALFM_C306000WA</name>
    <name type="ORF">CaO19.7381</name>
</gene>